<keyword id="KW-0325">Glycoprotein</keyword>
<keyword id="KW-0378">Hydrolase</keyword>
<keyword id="KW-0479">Metal-binding</keyword>
<keyword id="KW-0482">Metalloprotease</keyword>
<keyword id="KW-0645">Protease</keyword>
<keyword id="KW-0964">Secreted</keyword>
<keyword id="KW-0732">Signal</keyword>
<keyword id="KW-0843">Virulence</keyword>
<keyword id="KW-0862">Zinc</keyword>
<keyword id="KW-0865">Zymogen</keyword>
<reference key="1">
    <citation type="journal article" date="2002" name="Int. J. Med. Microbiol.">
        <title>Secreted proteases from pathogenic fungi.</title>
        <authorList>
            <person name="Monod M."/>
            <person name="Capoccia S."/>
            <person name="Lechenne B."/>
            <person name="Zaugg C."/>
            <person name="Holdom M."/>
            <person name="Jousson O."/>
        </authorList>
    </citation>
    <scope>NUCLEOTIDE SEQUENCE [GENOMIC DNA / MRNA]</scope>
</reference>
<reference key="2">
    <citation type="journal article" date="2004" name="Microbiology">
        <title>Multiplication of an ancestral gene encoding secreted fungalysin preceded species differentiation in the dermatophytes Trichophyton and Microsporum.</title>
        <authorList>
            <person name="Jousson O."/>
            <person name="Lechenne B."/>
            <person name="Bontems O."/>
            <person name="Capoccia S."/>
            <person name="Mignon B."/>
            <person name="Barblan J."/>
            <person name="Quadroni M."/>
            <person name="Monod M."/>
        </authorList>
    </citation>
    <scope>NUCLEOTIDE SEQUENCE [GENOMIC DNA]</scope>
    <scope>IDENTIFICATION BY MASS SPECTROMETRY</scope>
    <scope>SUBCELLULAR LOCATION</scope>
</reference>
<reference key="3">
    <citation type="journal article" date="2009" name="Eukaryot. Cell">
        <title>Gene expression profiling in the human pathogenic dermatophyte Trichophyton rubrum during growth on proteins.</title>
        <authorList>
            <person name="Zaugg C."/>
            <person name="Monod M."/>
            <person name="Weber J."/>
            <person name="Harshman K."/>
            <person name="Pradervand S."/>
            <person name="Thomas J."/>
            <person name="Bueno M."/>
            <person name="Giddey K."/>
            <person name="Staib P."/>
        </authorList>
    </citation>
    <scope>INDUCTION</scope>
</reference>
<accession>Q8NIJ4</accession>
<proteinExistence type="evidence at protein level"/>
<name>MEP4_TRIRU</name>
<organism>
    <name type="scientific">Trichophyton rubrum</name>
    <name type="common">Athlete's foot fungus</name>
    <name type="synonym">Epidermophyton rubrum</name>
    <dbReference type="NCBI Taxonomy" id="5551"/>
    <lineage>
        <taxon>Eukaryota</taxon>
        <taxon>Fungi</taxon>
        <taxon>Dikarya</taxon>
        <taxon>Ascomycota</taxon>
        <taxon>Pezizomycotina</taxon>
        <taxon>Eurotiomycetes</taxon>
        <taxon>Eurotiomycetidae</taxon>
        <taxon>Onygenales</taxon>
        <taxon>Arthrodermataceae</taxon>
        <taxon>Trichophyton</taxon>
    </lineage>
</organism>
<feature type="signal peptide" evidence="2">
    <location>
        <begin position="1"/>
        <end position="18"/>
    </location>
</feature>
<feature type="propeptide" id="PRO_0000380866" evidence="1">
    <location>
        <begin position="19"/>
        <end position="254"/>
    </location>
</feature>
<feature type="chain" id="PRO_0000380867" description="Extracellular metalloproteinase 4">
    <location>
        <begin position="255"/>
        <end position="643"/>
    </location>
</feature>
<feature type="region of interest" description="Disordered" evidence="4">
    <location>
        <begin position="47"/>
        <end position="73"/>
    </location>
</feature>
<feature type="compositionally biased region" description="Basic and acidic residues" evidence="4">
    <location>
        <begin position="47"/>
        <end position="57"/>
    </location>
</feature>
<feature type="compositionally biased region" description="Low complexity" evidence="4">
    <location>
        <begin position="61"/>
        <end position="73"/>
    </location>
</feature>
<feature type="active site" evidence="3">
    <location>
        <position position="438"/>
    </location>
</feature>
<feature type="binding site" evidence="3">
    <location>
        <position position="437"/>
    </location>
    <ligand>
        <name>Zn(2+)</name>
        <dbReference type="ChEBI" id="CHEBI:29105"/>
        <note>catalytic</note>
    </ligand>
</feature>
<feature type="binding site" evidence="3">
    <location>
        <position position="441"/>
    </location>
    <ligand>
        <name>Zn(2+)</name>
        <dbReference type="ChEBI" id="CHEBI:29105"/>
        <note>catalytic</note>
    </ligand>
</feature>
<feature type="glycosylation site" description="N-linked (GlcNAc...) asparagine" evidence="2">
    <location>
        <position position="271"/>
    </location>
</feature>
<feature type="glycosylation site" description="N-linked (GlcNAc...) asparagine" evidence="2">
    <location>
        <position position="420"/>
    </location>
</feature>
<feature type="glycosylation site" description="N-linked (GlcNAc...) asparagine" evidence="2">
    <location>
        <position position="603"/>
    </location>
</feature>
<feature type="glycosylation site" description="N-linked (GlcNAc...) asparagine" evidence="2">
    <location>
        <position position="629"/>
    </location>
</feature>
<sequence>MHGLMLAGLLALPLSVLGHPTESHSSGISRRAIDITSYRLPQISKYTKSDAVPKQDGESFTTSSTGNDNSSSGDYVTTATNWLKKTLPKATYRLVKDHYIGDSGIGHVHFRQTAHGIDIDNTDFNVNIGRDGKVFSFGNSFYDGEIPKANPMVKRDFSDPVNALHGAIQILNLPVTAKPENVKAKPVEGKENFKFEGTSGALSDPKAQLVYLQKDGGLVLSWKVETDVGDNWLLTYVDANKNDKVHSVVDYVSAAEYQVYPWGINDPTEGNRTTLHLPWLKTLSTDWHIDGKGWYSTTRGNNAIAQENPTGGPEYENNYRPKSPLFIFKYPYSKAMTPPSSYRDASITQLFYTTNVYHDVLYILGFNEKAGNFQINNWNKGGVGGDYAILNSQDGSGVNNANFATPPDGQPGRMRMYTWNASIPERDGCFEAGIVIHEYTHGVSNRLTGGPENSRCLAALESGGMGEGWSDFFATAIRLKPGDTRVTDYTMGEWASNRPNGIRKYRYSTSLTTNPHMYVDADGLTSVHAIGNIWASMLYELLWNLIDKHGKGDVTKIRPVLKNGVPTDGRHLAMKIVLDGMALQPCLPNFVQARDAILDADKNLTQGSNKCEIWKAFAKRGLGVGAVFNLSKRTGSNELPAGC</sequence>
<protein>
    <recommendedName>
        <fullName>Extracellular metalloproteinase 4</fullName>
        <ecNumber>3.4.24.-</ecNumber>
    </recommendedName>
    <alternativeName>
        <fullName>Fungalysin MEP4</fullName>
    </alternativeName>
</protein>
<gene>
    <name type="primary">MEP4</name>
</gene>
<evidence type="ECO:0000250" key="1"/>
<evidence type="ECO:0000255" key="2"/>
<evidence type="ECO:0000255" key="3">
    <source>
        <dbReference type="PROSITE-ProRule" id="PRU10095"/>
    </source>
</evidence>
<evidence type="ECO:0000256" key="4">
    <source>
        <dbReference type="SAM" id="MobiDB-lite"/>
    </source>
</evidence>
<evidence type="ECO:0000269" key="5">
    <source>
    </source>
</evidence>
<evidence type="ECO:0000269" key="6">
    <source>
    </source>
</evidence>
<evidence type="ECO:0000305" key="7"/>
<dbReference type="EC" id="3.4.24.-"/>
<dbReference type="EMBL" id="AF407192">
    <property type="protein sequence ID" value="AAN03643.1"/>
    <property type="molecule type" value="mRNA"/>
</dbReference>
<dbReference type="EMBL" id="AF407191">
    <property type="protein sequence ID" value="AAN03642.1"/>
    <property type="molecule type" value="Genomic_DNA"/>
</dbReference>
<dbReference type="SMR" id="Q8NIJ4"/>
<dbReference type="MEROPS" id="M36.001"/>
<dbReference type="GlyCosmos" id="Q8NIJ4">
    <property type="glycosylation" value="4 sites, No reported glycans"/>
</dbReference>
<dbReference type="VEuPathDB" id="FungiDB:TERG_04324"/>
<dbReference type="GO" id="GO:0005576">
    <property type="term" value="C:extracellular region"/>
    <property type="evidence" value="ECO:0007669"/>
    <property type="project" value="UniProtKB-SubCell"/>
</dbReference>
<dbReference type="GO" id="GO:0004222">
    <property type="term" value="F:metalloendopeptidase activity"/>
    <property type="evidence" value="ECO:0007669"/>
    <property type="project" value="InterPro"/>
</dbReference>
<dbReference type="GO" id="GO:0008270">
    <property type="term" value="F:zinc ion binding"/>
    <property type="evidence" value="ECO:0007669"/>
    <property type="project" value="InterPro"/>
</dbReference>
<dbReference type="GO" id="GO:0006508">
    <property type="term" value="P:proteolysis"/>
    <property type="evidence" value="ECO:0007669"/>
    <property type="project" value="UniProtKB-KW"/>
</dbReference>
<dbReference type="CDD" id="cd09596">
    <property type="entry name" value="M36"/>
    <property type="match status" value="1"/>
</dbReference>
<dbReference type="Gene3D" id="3.10.170.10">
    <property type="match status" value="1"/>
</dbReference>
<dbReference type="Gene3D" id="1.10.390.10">
    <property type="entry name" value="Neutral Protease Domain 2"/>
    <property type="match status" value="1"/>
</dbReference>
<dbReference type="InterPro" id="IPR011096">
    <property type="entry name" value="FTP_domain"/>
</dbReference>
<dbReference type="InterPro" id="IPR050371">
    <property type="entry name" value="Fungal_virulence_M36"/>
</dbReference>
<dbReference type="InterPro" id="IPR001842">
    <property type="entry name" value="Peptidase_M36"/>
</dbReference>
<dbReference type="InterPro" id="IPR027268">
    <property type="entry name" value="Peptidase_M4/M1_CTD_sf"/>
</dbReference>
<dbReference type="PANTHER" id="PTHR33478">
    <property type="entry name" value="EXTRACELLULAR METALLOPROTEINASE MEP"/>
    <property type="match status" value="1"/>
</dbReference>
<dbReference type="PANTHER" id="PTHR33478:SF1">
    <property type="entry name" value="EXTRACELLULAR METALLOPROTEINASE MEP"/>
    <property type="match status" value="1"/>
</dbReference>
<dbReference type="Pfam" id="PF07504">
    <property type="entry name" value="FTP"/>
    <property type="match status" value="1"/>
</dbReference>
<dbReference type="Pfam" id="PF02128">
    <property type="entry name" value="Peptidase_M36"/>
    <property type="match status" value="1"/>
</dbReference>
<dbReference type="PRINTS" id="PR00999">
    <property type="entry name" value="FUNGALYSIN"/>
</dbReference>
<dbReference type="SUPFAM" id="SSF55486">
    <property type="entry name" value="Metalloproteases ('zincins'), catalytic domain"/>
    <property type="match status" value="1"/>
</dbReference>
<dbReference type="PROSITE" id="PS00142">
    <property type="entry name" value="ZINC_PROTEASE"/>
    <property type="match status" value="1"/>
</dbReference>
<comment type="function">
    <text evidence="1">Secreted metalloproteinase probably acting as a virulence factor.</text>
</comment>
<comment type="cofactor">
    <cofactor evidence="1">
        <name>Zn(2+)</name>
        <dbReference type="ChEBI" id="CHEBI:29105"/>
    </cofactor>
    <text evidence="1">Binds 1 zinc ion per subunit.</text>
</comment>
<comment type="subcellular location">
    <subcellularLocation>
        <location evidence="5">Secreted</location>
    </subcellularLocation>
</comment>
<comment type="induction">
    <text evidence="6">Expression is strongly increased during growth on protein-rich medium. Expressed at even higher levels when keratin is present in the protein-rich medium.</text>
</comment>
<comment type="similarity">
    <text evidence="7">Belongs to the peptidase M36 family.</text>
</comment>